<organism>
    <name type="scientific">Yersinia pseudotuberculosis serotype O:3 (strain YPIII)</name>
    <dbReference type="NCBI Taxonomy" id="502800"/>
    <lineage>
        <taxon>Bacteria</taxon>
        <taxon>Pseudomonadati</taxon>
        <taxon>Pseudomonadota</taxon>
        <taxon>Gammaproteobacteria</taxon>
        <taxon>Enterobacterales</taxon>
        <taxon>Yersiniaceae</taxon>
        <taxon>Yersinia</taxon>
    </lineage>
</organism>
<sequence>MKQLLDFLPLVVFFIFYKMYDIFVASGALIVATLVALAFTWLKYRKVEKMTLVTAAMVLVFGTLTLAFHSDLFIKWKVTVLYVLFALALLVSQWVMKKPLIQRMLGKELTLPDKVWSTLNLSWAIFFLVCGLLNIYVAFWLPQDIWVNFKVFGLTALTLIFTLISGVYIYRHMPEEQKKS</sequence>
<accession>B1JKS9</accession>
<dbReference type="EMBL" id="CP000950">
    <property type="protein sequence ID" value="ACA68340.1"/>
    <property type="molecule type" value="Genomic_DNA"/>
</dbReference>
<dbReference type="RefSeq" id="WP_002210640.1">
    <property type="nucleotide sequence ID" value="NZ_CP009792.1"/>
</dbReference>
<dbReference type="KEGG" id="ypy:YPK_2053"/>
<dbReference type="PATRIC" id="fig|502800.11.peg.2732"/>
<dbReference type="GO" id="GO:0005886">
    <property type="term" value="C:plasma membrane"/>
    <property type="evidence" value="ECO:0007669"/>
    <property type="project" value="UniProtKB-SubCell"/>
</dbReference>
<dbReference type="HAMAP" id="MF_00189">
    <property type="entry name" value="YciB"/>
    <property type="match status" value="1"/>
</dbReference>
<dbReference type="InterPro" id="IPR006008">
    <property type="entry name" value="YciB"/>
</dbReference>
<dbReference type="NCBIfam" id="TIGR00997">
    <property type="entry name" value="ispZ"/>
    <property type="match status" value="1"/>
</dbReference>
<dbReference type="NCBIfam" id="NF001324">
    <property type="entry name" value="PRK00259.1-2"/>
    <property type="match status" value="1"/>
</dbReference>
<dbReference type="NCBIfam" id="NF001325">
    <property type="entry name" value="PRK00259.1-3"/>
    <property type="match status" value="1"/>
</dbReference>
<dbReference type="NCBIfam" id="NF001326">
    <property type="entry name" value="PRK00259.1-4"/>
    <property type="match status" value="1"/>
</dbReference>
<dbReference type="PANTHER" id="PTHR36917:SF1">
    <property type="entry name" value="INNER MEMBRANE-SPANNING PROTEIN YCIB"/>
    <property type="match status" value="1"/>
</dbReference>
<dbReference type="PANTHER" id="PTHR36917">
    <property type="entry name" value="INTRACELLULAR SEPTATION PROTEIN A-RELATED"/>
    <property type="match status" value="1"/>
</dbReference>
<dbReference type="Pfam" id="PF04279">
    <property type="entry name" value="IspA"/>
    <property type="match status" value="1"/>
</dbReference>
<proteinExistence type="inferred from homology"/>
<gene>
    <name evidence="1" type="primary">yciB</name>
    <name type="ordered locus">YPK_2053</name>
</gene>
<reference key="1">
    <citation type="submission" date="2008-02" db="EMBL/GenBank/DDBJ databases">
        <title>Complete sequence of Yersinia pseudotuberculosis YPIII.</title>
        <authorList>
            <consortium name="US DOE Joint Genome Institute"/>
            <person name="Copeland A."/>
            <person name="Lucas S."/>
            <person name="Lapidus A."/>
            <person name="Glavina del Rio T."/>
            <person name="Dalin E."/>
            <person name="Tice H."/>
            <person name="Bruce D."/>
            <person name="Goodwin L."/>
            <person name="Pitluck S."/>
            <person name="Munk A.C."/>
            <person name="Brettin T."/>
            <person name="Detter J.C."/>
            <person name="Han C."/>
            <person name="Tapia R."/>
            <person name="Schmutz J."/>
            <person name="Larimer F."/>
            <person name="Land M."/>
            <person name="Hauser L."/>
            <person name="Challacombe J.F."/>
            <person name="Green L."/>
            <person name="Lindler L.E."/>
            <person name="Nikolich M.P."/>
            <person name="Richardson P."/>
        </authorList>
    </citation>
    <scope>NUCLEOTIDE SEQUENCE [LARGE SCALE GENOMIC DNA]</scope>
    <source>
        <strain>YPIII</strain>
    </source>
</reference>
<keyword id="KW-0997">Cell inner membrane</keyword>
<keyword id="KW-1003">Cell membrane</keyword>
<keyword id="KW-0472">Membrane</keyword>
<keyword id="KW-0812">Transmembrane</keyword>
<keyword id="KW-1133">Transmembrane helix</keyword>
<protein>
    <recommendedName>
        <fullName evidence="1">Inner membrane-spanning protein YciB</fullName>
    </recommendedName>
</protein>
<feature type="chain" id="PRO_1000098903" description="Inner membrane-spanning protein YciB">
    <location>
        <begin position="1"/>
        <end position="180"/>
    </location>
</feature>
<feature type="transmembrane region" description="Helical" evidence="1">
    <location>
        <begin position="22"/>
        <end position="42"/>
    </location>
</feature>
<feature type="transmembrane region" description="Helical" evidence="1">
    <location>
        <begin position="50"/>
        <end position="70"/>
    </location>
</feature>
<feature type="transmembrane region" description="Helical" evidence="1">
    <location>
        <begin position="72"/>
        <end position="92"/>
    </location>
</feature>
<feature type="transmembrane region" description="Helical" evidence="1">
    <location>
        <begin position="121"/>
        <end position="141"/>
    </location>
</feature>
<feature type="transmembrane region" description="Helical" evidence="1">
    <location>
        <begin position="149"/>
        <end position="169"/>
    </location>
</feature>
<comment type="function">
    <text evidence="1">Plays a role in cell envelope biogenesis, maintenance of cell envelope integrity and membrane homeostasis.</text>
</comment>
<comment type="subcellular location">
    <subcellularLocation>
        <location evidence="1">Cell inner membrane</location>
        <topology evidence="1">Multi-pass membrane protein</topology>
    </subcellularLocation>
</comment>
<comment type="similarity">
    <text evidence="1">Belongs to the YciB family.</text>
</comment>
<name>YCIB_YERPY</name>
<evidence type="ECO:0000255" key="1">
    <source>
        <dbReference type="HAMAP-Rule" id="MF_00189"/>
    </source>
</evidence>